<sequence length="213" mass="23654">MVEKTILEAVKKVVEESPKRNFSESVDLAINLKNLDMNQPKNRVDEEVILPHGLGKELKIGVFAKGDVGLKAKAAGAAYVISDVELEELAADKNRARVLANECDLFIAETQFMPIIGKNLGIVLGPRGKMPIPLMPNKDVGELIQSKQNAVKLRSKDRLTFHVAVGRRDMNPEDLAENIETIMSRLERVLDKGKHNLRTVYVTTTMGKSERVV</sequence>
<evidence type="ECO:0000255" key="1">
    <source>
        <dbReference type="HAMAP-Rule" id="MF_01318"/>
    </source>
</evidence>
<evidence type="ECO:0000305" key="2"/>
<name>RL1_METAC</name>
<comment type="function">
    <text evidence="1">Binds directly to 23S rRNA. Probably involved in E site tRNA release.</text>
</comment>
<comment type="function">
    <text evidence="1">Protein L1 is also a translational repressor protein, it controls the translation of its operon by binding to its mRNA.</text>
</comment>
<comment type="subunit">
    <text evidence="1">Part of the 50S ribosomal subunit.</text>
</comment>
<comment type="similarity">
    <text evidence="1">Belongs to the universal ribosomal protein uL1 family.</text>
</comment>
<organism>
    <name type="scientific">Methanosarcina acetivorans (strain ATCC 35395 / DSM 2834 / JCM 12185 / C2A)</name>
    <dbReference type="NCBI Taxonomy" id="188937"/>
    <lineage>
        <taxon>Archaea</taxon>
        <taxon>Methanobacteriati</taxon>
        <taxon>Methanobacteriota</taxon>
        <taxon>Stenosarchaea group</taxon>
        <taxon>Methanomicrobia</taxon>
        <taxon>Methanosarcinales</taxon>
        <taxon>Methanosarcinaceae</taxon>
        <taxon>Methanosarcina</taxon>
    </lineage>
</organism>
<dbReference type="EMBL" id="AE010299">
    <property type="protein sequence ID" value="AAM07619.1"/>
    <property type="molecule type" value="Genomic_DNA"/>
</dbReference>
<dbReference type="RefSeq" id="WP_011024156.1">
    <property type="nucleotide sequence ID" value="NC_003552.1"/>
</dbReference>
<dbReference type="SMR" id="Q8TI81"/>
<dbReference type="FunCoup" id="Q8TI81">
    <property type="interactions" value="144"/>
</dbReference>
<dbReference type="STRING" id="188937.MA_4275"/>
<dbReference type="EnsemblBacteria" id="AAM07619">
    <property type="protein sequence ID" value="AAM07619"/>
    <property type="gene ID" value="MA_4275"/>
</dbReference>
<dbReference type="GeneID" id="1476169"/>
<dbReference type="KEGG" id="mac:MA_4275"/>
<dbReference type="HOGENOM" id="CLU_062853_4_0_2"/>
<dbReference type="InParanoid" id="Q8TI81"/>
<dbReference type="OrthoDB" id="10382at2157"/>
<dbReference type="PhylomeDB" id="Q8TI81"/>
<dbReference type="Proteomes" id="UP000002487">
    <property type="component" value="Chromosome"/>
</dbReference>
<dbReference type="GO" id="GO:0015934">
    <property type="term" value="C:large ribosomal subunit"/>
    <property type="evidence" value="ECO:0007669"/>
    <property type="project" value="InterPro"/>
</dbReference>
<dbReference type="GO" id="GO:0019843">
    <property type="term" value="F:rRNA binding"/>
    <property type="evidence" value="ECO:0007669"/>
    <property type="project" value="UniProtKB-UniRule"/>
</dbReference>
<dbReference type="GO" id="GO:0003735">
    <property type="term" value="F:structural constituent of ribosome"/>
    <property type="evidence" value="ECO:0007669"/>
    <property type="project" value="InterPro"/>
</dbReference>
<dbReference type="GO" id="GO:0000049">
    <property type="term" value="F:tRNA binding"/>
    <property type="evidence" value="ECO:0007669"/>
    <property type="project" value="UniProtKB-KW"/>
</dbReference>
<dbReference type="GO" id="GO:0006417">
    <property type="term" value="P:regulation of translation"/>
    <property type="evidence" value="ECO:0007669"/>
    <property type="project" value="UniProtKB-KW"/>
</dbReference>
<dbReference type="GO" id="GO:0006412">
    <property type="term" value="P:translation"/>
    <property type="evidence" value="ECO:0007669"/>
    <property type="project" value="UniProtKB-UniRule"/>
</dbReference>
<dbReference type="CDD" id="cd00403">
    <property type="entry name" value="Ribosomal_L1"/>
    <property type="match status" value="1"/>
</dbReference>
<dbReference type="FunFam" id="3.40.50.790:FF:000005">
    <property type="entry name" value="50S ribosomal protein L1"/>
    <property type="match status" value="1"/>
</dbReference>
<dbReference type="Gene3D" id="3.30.190.20">
    <property type="match status" value="1"/>
</dbReference>
<dbReference type="Gene3D" id="3.40.50.790">
    <property type="match status" value="1"/>
</dbReference>
<dbReference type="HAMAP" id="MF_01318_A">
    <property type="entry name" value="Ribosomal_uL1_A"/>
    <property type="match status" value="1"/>
</dbReference>
<dbReference type="InterPro" id="IPR002143">
    <property type="entry name" value="Ribosomal_uL1"/>
</dbReference>
<dbReference type="InterPro" id="IPR023674">
    <property type="entry name" value="Ribosomal_uL1-like"/>
</dbReference>
<dbReference type="InterPro" id="IPR028364">
    <property type="entry name" value="Ribosomal_uL1/biogenesis"/>
</dbReference>
<dbReference type="InterPro" id="IPR016095">
    <property type="entry name" value="Ribosomal_uL1_3-a/b-sand"/>
</dbReference>
<dbReference type="InterPro" id="IPR023669">
    <property type="entry name" value="Ribosomal_uL1_arc"/>
</dbReference>
<dbReference type="InterPro" id="IPR023673">
    <property type="entry name" value="Ribosomal_uL1_CS"/>
</dbReference>
<dbReference type="NCBIfam" id="NF003244">
    <property type="entry name" value="PRK04203.1"/>
    <property type="match status" value="1"/>
</dbReference>
<dbReference type="PANTHER" id="PTHR36427">
    <property type="entry name" value="54S RIBOSOMAL PROTEIN L1, MITOCHONDRIAL"/>
    <property type="match status" value="1"/>
</dbReference>
<dbReference type="PANTHER" id="PTHR36427:SF3">
    <property type="entry name" value="LARGE RIBOSOMAL SUBUNIT PROTEIN UL1M"/>
    <property type="match status" value="1"/>
</dbReference>
<dbReference type="Pfam" id="PF00687">
    <property type="entry name" value="Ribosomal_L1"/>
    <property type="match status" value="1"/>
</dbReference>
<dbReference type="PIRSF" id="PIRSF002155">
    <property type="entry name" value="Ribosomal_L1"/>
    <property type="match status" value="1"/>
</dbReference>
<dbReference type="SUPFAM" id="SSF56808">
    <property type="entry name" value="Ribosomal protein L1"/>
    <property type="match status" value="1"/>
</dbReference>
<dbReference type="PROSITE" id="PS01199">
    <property type="entry name" value="RIBOSOMAL_L1"/>
    <property type="match status" value="1"/>
</dbReference>
<gene>
    <name evidence="1" type="primary">rpl1</name>
    <name type="ordered locus">MA_4275</name>
</gene>
<protein>
    <recommendedName>
        <fullName evidence="1">Large ribosomal subunit protein uL1</fullName>
    </recommendedName>
    <alternativeName>
        <fullName evidence="2">50S ribosomal protein L1</fullName>
    </alternativeName>
</protein>
<proteinExistence type="inferred from homology"/>
<accession>Q8TI81</accession>
<reference key="1">
    <citation type="journal article" date="2002" name="Genome Res.">
        <title>The genome of Methanosarcina acetivorans reveals extensive metabolic and physiological diversity.</title>
        <authorList>
            <person name="Galagan J.E."/>
            <person name="Nusbaum C."/>
            <person name="Roy A."/>
            <person name="Endrizzi M.G."/>
            <person name="Macdonald P."/>
            <person name="FitzHugh W."/>
            <person name="Calvo S."/>
            <person name="Engels R."/>
            <person name="Smirnov S."/>
            <person name="Atnoor D."/>
            <person name="Brown A."/>
            <person name="Allen N."/>
            <person name="Naylor J."/>
            <person name="Stange-Thomann N."/>
            <person name="DeArellano K."/>
            <person name="Johnson R."/>
            <person name="Linton L."/>
            <person name="McEwan P."/>
            <person name="McKernan K."/>
            <person name="Talamas J."/>
            <person name="Tirrell A."/>
            <person name="Ye W."/>
            <person name="Zimmer A."/>
            <person name="Barber R.D."/>
            <person name="Cann I."/>
            <person name="Graham D.E."/>
            <person name="Grahame D.A."/>
            <person name="Guss A.M."/>
            <person name="Hedderich R."/>
            <person name="Ingram-Smith C."/>
            <person name="Kuettner H.C."/>
            <person name="Krzycki J.A."/>
            <person name="Leigh J.A."/>
            <person name="Li W."/>
            <person name="Liu J."/>
            <person name="Mukhopadhyay B."/>
            <person name="Reeve J.N."/>
            <person name="Smith K."/>
            <person name="Springer T.A."/>
            <person name="Umayam L.A."/>
            <person name="White O."/>
            <person name="White R.H."/>
            <person name="de Macario E.C."/>
            <person name="Ferry J.G."/>
            <person name="Jarrell K.F."/>
            <person name="Jing H."/>
            <person name="Macario A.J.L."/>
            <person name="Paulsen I.T."/>
            <person name="Pritchett M."/>
            <person name="Sowers K.R."/>
            <person name="Swanson R.V."/>
            <person name="Zinder S.H."/>
            <person name="Lander E."/>
            <person name="Metcalf W.W."/>
            <person name="Birren B."/>
        </authorList>
    </citation>
    <scope>NUCLEOTIDE SEQUENCE [LARGE SCALE GENOMIC DNA]</scope>
    <source>
        <strain>ATCC 35395 / DSM 2834 / JCM 12185 / C2A</strain>
    </source>
</reference>
<keyword id="KW-1185">Reference proteome</keyword>
<keyword id="KW-0678">Repressor</keyword>
<keyword id="KW-0687">Ribonucleoprotein</keyword>
<keyword id="KW-0689">Ribosomal protein</keyword>
<keyword id="KW-0694">RNA-binding</keyword>
<keyword id="KW-0699">rRNA-binding</keyword>
<keyword id="KW-0810">Translation regulation</keyword>
<keyword id="KW-0820">tRNA-binding</keyword>
<feature type="chain" id="PRO_0000125797" description="Large ribosomal subunit protein uL1">
    <location>
        <begin position="1"/>
        <end position="213"/>
    </location>
</feature>